<accession>Q6A6U0</accession>
<keyword id="KW-0963">Cytoplasm</keyword>
<keyword id="KW-0275">Fatty acid biosynthesis</keyword>
<keyword id="KW-0276">Fatty acid metabolism</keyword>
<keyword id="KW-0444">Lipid biosynthesis</keyword>
<keyword id="KW-0443">Lipid metabolism</keyword>
<keyword id="KW-0460">Magnesium</keyword>
<keyword id="KW-0479">Metal-binding</keyword>
<keyword id="KW-0808">Transferase</keyword>
<sequence>MIIGIGVDVCDISRWEAAVQRHPGMVRKMLTHTEAVMPARSQAARFAAKEALYKALGGGEGLSWQDCEVVTDGEAVRFELRGSLARRAEELGVRRVHLSLTHDAGVAVAMVVCEG</sequence>
<organism>
    <name type="scientific">Cutibacterium acnes (strain DSM 16379 / KPA171202)</name>
    <name type="common">Propionibacterium acnes</name>
    <dbReference type="NCBI Taxonomy" id="267747"/>
    <lineage>
        <taxon>Bacteria</taxon>
        <taxon>Bacillati</taxon>
        <taxon>Actinomycetota</taxon>
        <taxon>Actinomycetes</taxon>
        <taxon>Propionibacteriales</taxon>
        <taxon>Propionibacteriaceae</taxon>
        <taxon>Cutibacterium</taxon>
    </lineage>
</organism>
<dbReference type="EC" id="2.7.8.7" evidence="1"/>
<dbReference type="EMBL" id="AE017283">
    <property type="protein sequence ID" value="AAT83523.1"/>
    <property type="status" value="ALT_INIT"/>
    <property type="molecule type" value="Genomic_DNA"/>
</dbReference>
<dbReference type="RefSeq" id="WP_002514798.1">
    <property type="nucleotide sequence ID" value="NZ_CP025935.1"/>
</dbReference>
<dbReference type="SMR" id="Q6A6U0"/>
<dbReference type="EnsemblBacteria" id="AAT83523">
    <property type="protein sequence ID" value="AAT83523"/>
    <property type="gene ID" value="PPA1793"/>
</dbReference>
<dbReference type="KEGG" id="pac:PPA1793"/>
<dbReference type="eggNOG" id="COG0736">
    <property type="taxonomic scope" value="Bacteria"/>
</dbReference>
<dbReference type="HOGENOM" id="CLU_089696_0_0_11"/>
<dbReference type="Proteomes" id="UP000000603">
    <property type="component" value="Chromosome"/>
</dbReference>
<dbReference type="GO" id="GO:0005737">
    <property type="term" value="C:cytoplasm"/>
    <property type="evidence" value="ECO:0007669"/>
    <property type="project" value="UniProtKB-SubCell"/>
</dbReference>
<dbReference type="GO" id="GO:0008897">
    <property type="term" value="F:holo-[acyl-carrier-protein] synthase activity"/>
    <property type="evidence" value="ECO:0007669"/>
    <property type="project" value="UniProtKB-UniRule"/>
</dbReference>
<dbReference type="GO" id="GO:0000287">
    <property type="term" value="F:magnesium ion binding"/>
    <property type="evidence" value="ECO:0007669"/>
    <property type="project" value="UniProtKB-UniRule"/>
</dbReference>
<dbReference type="GO" id="GO:0006633">
    <property type="term" value="P:fatty acid biosynthetic process"/>
    <property type="evidence" value="ECO:0007669"/>
    <property type="project" value="UniProtKB-UniRule"/>
</dbReference>
<dbReference type="Gene3D" id="3.90.470.20">
    <property type="entry name" value="4'-phosphopantetheinyl transferase domain"/>
    <property type="match status" value="1"/>
</dbReference>
<dbReference type="HAMAP" id="MF_00101">
    <property type="entry name" value="AcpS"/>
    <property type="match status" value="1"/>
</dbReference>
<dbReference type="InterPro" id="IPR008278">
    <property type="entry name" value="4-PPantetheinyl_Trfase_dom"/>
</dbReference>
<dbReference type="InterPro" id="IPR037143">
    <property type="entry name" value="4-PPantetheinyl_Trfase_dom_sf"/>
</dbReference>
<dbReference type="InterPro" id="IPR002582">
    <property type="entry name" value="ACPS"/>
</dbReference>
<dbReference type="InterPro" id="IPR004568">
    <property type="entry name" value="Ppantetheine-prot_Trfase_dom"/>
</dbReference>
<dbReference type="NCBIfam" id="TIGR00516">
    <property type="entry name" value="acpS"/>
    <property type="match status" value="1"/>
</dbReference>
<dbReference type="NCBIfam" id="TIGR00556">
    <property type="entry name" value="pantethn_trn"/>
    <property type="match status" value="1"/>
</dbReference>
<dbReference type="NCBIfam" id="NF000832">
    <property type="entry name" value="PRK00070.3-2"/>
    <property type="match status" value="1"/>
</dbReference>
<dbReference type="Pfam" id="PF01648">
    <property type="entry name" value="ACPS"/>
    <property type="match status" value="1"/>
</dbReference>
<dbReference type="SUPFAM" id="SSF56214">
    <property type="entry name" value="4'-phosphopantetheinyl transferase"/>
    <property type="match status" value="1"/>
</dbReference>
<reference key="1">
    <citation type="journal article" date="2004" name="Science">
        <title>The complete genome sequence of Propionibacterium acnes, a commensal of human skin.</title>
        <authorList>
            <person name="Brueggemann H."/>
            <person name="Henne A."/>
            <person name="Hoster F."/>
            <person name="Liesegang H."/>
            <person name="Wiezer A."/>
            <person name="Strittmatter A."/>
            <person name="Hujer S."/>
            <person name="Duerre P."/>
            <person name="Gottschalk G."/>
        </authorList>
    </citation>
    <scope>NUCLEOTIDE SEQUENCE [LARGE SCALE GENOMIC DNA]</scope>
    <source>
        <strain>DSM 16379 / KPA171202</strain>
    </source>
</reference>
<evidence type="ECO:0000255" key="1">
    <source>
        <dbReference type="HAMAP-Rule" id="MF_00101"/>
    </source>
</evidence>
<evidence type="ECO:0000305" key="2"/>
<name>ACPS_CUTAK</name>
<gene>
    <name evidence="1" type="primary">acpS</name>
    <name type="ordered locus">PPA1793</name>
</gene>
<comment type="function">
    <text evidence="1">Transfers the 4'-phosphopantetheine moiety from coenzyme A to a Ser of acyl-carrier-protein.</text>
</comment>
<comment type="catalytic activity">
    <reaction evidence="1">
        <text>apo-[ACP] + CoA = holo-[ACP] + adenosine 3',5'-bisphosphate + H(+)</text>
        <dbReference type="Rhea" id="RHEA:12068"/>
        <dbReference type="Rhea" id="RHEA-COMP:9685"/>
        <dbReference type="Rhea" id="RHEA-COMP:9690"/>
        <dbReference type="ChEBI" id="CHEBI:15378"/>
        <dbReference type="ChEBI" id="CHEBI:29999"/>
        <dbReference type="ChEBI" id="CHEBI:57287"/>
        <dbReference type="ChEBI" id="CHEBI:58343"/>
        <dbReference type="ChEBI" id="CHEBI:64479"/>
        <dbReference type="EC" id="2.7.8.7"/>
    </reaction>
</comment>
<comment type="cofactor">
    <cofactor evidence="1">
        <name>Mg(2+)</name>
        <dbReference type="ChEBI" id="CHEBI:18420"/>
    </cofactor>
</comment>
<comment type="subcellular location">
    <subcellularLocation>
        <location evidence="1">Cytoplasm</location>
    </subcellularLocation>
</comment>
<comment type="similarity">
    <text evidence="1">Belongs to the P-Pant transferase superfamily. AcpS family.</text>
</comment>
<comment type="sequence caution" evidence="2">
    <conflict type="erroneous initiation">
        <sequence resource="EMBL-CDS" id="AAT83523"/>
    </conflict>
</comment>
<proteinExistence type="inferred from homology"/>
<feature type="chain" id="PRO_0000175686" description="Holo-[acyl-carrier-protein] synthase">
    <location>
        <begin position="1"/>
        <end position="115"/>
    </location>
</feature>
<feature type="binding site" evidence="1">
    <location>
        <position position="8"/>
    </location>
    <ligand>
        <name>Mg(2+)</name>
        <dbReference type="ChEBI" id="CHEBI:18420"/>
    </ligand>
</feature>
<feature type="binding site" evidence="1">
    <location>
        <position position="50"/>
    </location>
    <ligand>
        <name>Mg(2+)</name>
        <dbReference type="ChEBI" id="CHEBI:18420"/>
    </ligand>
</feature>
<protein>
    <recommendedName>
        <fullName evidence="1">Holo-[acyl-carrier-protein] synthase</fullName>
        <shortName evidence="1">Holo-ACP synthase</shortName>
        <ecNumber evidence="1">2.7.8.7</ecNumber>
    </recommendedName>
    <alternativeName>
        <fullName evidence="1">4'-phosphopantetheinyl transferase AcpS</fullName>
    </alternativeName>
</protein>